<proteinExistence type="inferred from homology"/>
<gene>
    <name evidence="1" type="primary">rpsM</name>
    <name type="ordered locus">Reut_A3157</name>
</gene>
<reference key="1">
    <citation type="journal article" date="2010" name="PLoS ONE">
        <title>The complete multipartite genome sequence of Cupriavidus necator JMP134, a versatile pollutant degrader.</title>
        <authorList>
            <person name="Lykidis A."/>
            <person name="Perez-Pantoja D."/>
            <person name="Ledger T."/>
            <person name="Mavromatis K."/>
            <person name="Anderson I.J."/>
            <person name="Ivanova N.N."/>
            <person name="Hooper S.D."/>
            <person name="Lapidus A."/>
            <person name="Lucas S."/>
            <person name="Gonzalez B."/>
            <person name="Kyrpides N.C."/>
        </authorList>
    </citation>
    <scope>NUCLEOTIDE SEQUENCE [LARGE SCALE GENOMIC DNA]</scope>
    <source>
        <strain>JMP134 / LMG 1197</strain>
    </source>
</reference>
<evidence type="ECO:0000255" key="1">
    <source>
        <dbReference type="HAMAP-Rule" id="MF_01315"/>
    </source>
</evidence>
<evidence type="ECO:0000256" key="2">
    <source>
        <dbReference type="SAM" id="MobiDB-lite"/>
    </source>
</evidence>
<evidence type="ECO:0000305" key="3"/>
<dbReference type="EMBL" id="CP000090">
    <property type="protein sequence ID" value="AAZ62517.1"/>
    <property type="molecule type" value="Genomic_DNA"/>
</dbReference>
<dbReference type="SMR" id="Q46WG6"/>
<dbReference type="STRING" id="264198.Reut_A3157"/>
<dbReference type="KEGG" id="reu:Reut_A3157"/>
<dbReference type="eggNOG" id="COG0099">
    <property type="taxonomic scope" value="Bacteria"/>
</dbReference>
<dbReference type="HOGENOM" id="CLU_103849_1_2_4"/>
<dbReference type="OrthoDB" id="9803610at2"/>
<dbReference type="GO" id="GO:0005829">
    <property type="term" value="C:cytosol"/>
    <property type="evidence" value="ECO:0007669"/>
    <property type="project" value="TreeGrafter"/>
</dbReference>
<dbReference type="GO" id="GO:0015935">
    <property type="term" value="C:small ribosomal subunit"/>
    <property type="evidence" value="ECO:0007669"/>
    <property type="project" value="TreeGrafter"/>
</dbReference>
<dbReference type="GO" id="GO:0019843">
    <property type="term" value="F:rRNA binding"/>
    <property type="evidence" value="ECO:0007669"/>
    <property type="project" value="UniProtKB-UniRule"/>
</dbReference>
<dbReference type="GO" id="GO:0003735">
    <property type="term" value="F:structural constituent of ribosome"/>
    <property type="evidence" value="ECO:0007669"/>
    <property type="project" value="InterPro"/>
</dbReference>
<dbReference type="GO" id="GO:0000049">
    <property type="term" value="F:tRNA binding"/>
    <property type="evidence" value="ECO:0007669"/>
    <property type="project" value="UniProtKB-UniRule"/>
</dbReference>
<dbReference type="GO" id="GO:0006412">
    <property type="term" value="P:translation"/>
    <property type="evidence" value="ECO:0007669"/>
    <property type="project" value="UniProtKB-UniRule"/>
</dbReference>
<dbReference type="FunFam" id="1.10.8.50:FF:000001">
    <property type="entry name" value="30S ribosomal protein S13"/>
    <property type="match status" value="1"/>
</dbReference>
<dbReference type="FunFam" id="4.10.910.10:FF:000001">
    <property type="entry name" value="30S ribosomal protein S13"/>
    <property type="match status" value="1"/>
</dbReference>
<dbReference type="Gene3D" id="1.10.8.50">
    <property type="match status" value="1"/>
</dbReference>
<dbReference type="Gene3D" id="4.10.910.10">
    <property type="entry name" value="30s ribosomal protein s13, domain 2"/>
    <property type="match status" value="1"/>
</dbReference>
<dbReference type="HAMAP" id="MF_01315">
    <property type="entry name" value="Ribosomal_uS13"/>
    <property type="match status" value="1"/>
</dbReference>
<dbReference type="InterPro" id="IPR027437">
    <property type="entry name" value="Rbsml_uS13_C"/>
</dbReference>
<dbReference type="InterPro" id="IPR001892">
    <property type="entry name" value="Ribosomal_uS13"/>
</dbReference>
<dbReference type="InterPro" id="IPR010979">
    <property type="entry name" value="Ribosomal_uS13-like_H2TH"/>
</dbReference>
<dbReference type="InterPro" id="IPR019980">
    <property type="entry name" value="Ribosomal_uS13_bac-type"/>
</dbReference>
<dbReference type="InterPro" id="IPR018269">
    <property type="entry name" value="Ribosomal_uS13_CS"/>
</dbReference>
<dbReference type="NCBIfam" id="TIGR03631">
    <property type="entry name" value="uS13_bact"/>
    <property type="match status" value="1"/>
</dbReference>
<dbReference type="PANTHER" id="PTHR10871">
    <property type="entry name" value="30S RIBOSOMAL PROTEIN S13/40S RIBOSOMAL PROTEIN S18"/>
    <property type="match status" value="1"/>
</dbReference>
<dbReference type="PANTHER" id="PTHR10871:SF1">
    <property type="entry name" value="SMALL RIBOSOMAL SUBUNIT PROTEIN US13M"/>
    <property type="match status" value="1"/>
</dbReference>
<dbReference type="Pfam" id="PF00416">
    <property type="entry name" value="Ribosomal_S13"/>
    <property type="match status" value="2"/>
</dbReference>
<dbReference type="PIRSF" id="PIRSF002134">
    <property type="entry name" value="Ribosomal_S13"/>
    <property type="match status" value="1"/>
</dbReference>
<dbReference type="SUPFAM" id="SSF46946">
    <property type="entry name" value="S13-like H2TH domain"/>
    <property type="match status" value="1"/>
</dbReference>
<dbReference type="PROSITE" id="PS00646">
    <property type="entry name" value="RIBOSOMAL_S13_1"/>
    <property type="match status" value="1"/>
</dbReference>
<dbReference type="PROSITE" id="PS50159">
    <property type="entry name" value="RIBOSOMAL_S13_2"/>
    <property type="match status" value="1"/>
</dbReference>
<accession>Q46WG6</accession>
<feature type="chain" id="PRO_0000230556" description="Small ribosomal subunit protein uS13">
    <location>
        <begin position="1"/>
        <end position="121"/>
    </location>
</feature>
<feature type="region of interest" description="Disordered" evidence="2">
    <location>
        <begin position="91"/>
        <end position="121"/>
    </location>
</feature>
<keyword id="KW-0687">Ribonucleoprotein</keyword>
<keyword id="KW-0689">Ribosomal protein</keyword>
<keyword id="KW-0694">RNA-binding</keyword>
<keyword id="KW-0699">rRNA-binding</keyword>
<keyword id="KW-0820">tRNA-binding</keyword>
<protein>
    <recommendedName>
        <fullName evidence="1">Small ribosomal subunit protein uS13</fullName>
    </recommendedName>
    <alternativeName>
        <fullName evidence="3">30S ribosomal protein S13</fullName>
    </alternativeName>
</protein>
<comment type="function">
    <text evidence="1">Located at the top of the head of the 30S subunit, it contacts several helices of the 16S rRNA. In the 70S ribosome it contacts the 23S rRNA (bridge B1a) and protein L5 of the 50S subunit (bridge B1b), connecting the 2 subunits; these bridges are implicated in subunit movement. Contacts the tRNAs in the A and P-sites.</text>
</comment>
<comment type="subunit">
    <text evidence="1">Part of the 30S ribosomal subunit. Forms a loose heterodimer with protein S19. Forms two bridges to the 50S subunit in the 70S ribosome.</text>
</comment>
<comment type="similarity">
    <text evidence="1">Belongs to the universal ribosomal protein uS13 family.</text>
</comment>
<name>RS13_CUPPJ</name>
<organism>
    <name type="scientific">Cupriavidus pinatubonensis (strain JMP 134 / LMG 1197)</name>
    <name type="common">Cupriavidus necator (strain JMP 134)</name>
    <dbReference type="NCBI Taxonomy" id="264198"/>
    <lineage>
        <taxon>Bacteria</taxon>
        <taxon>Pseudomonadati</taxon>
        <taxon>Pseudomonadota</taxon>
        <taxon>Betaproteobacteria</taxon>
        <taxon>Burkholderiales</taxon>
        <taxon>Burkholderiaceae</taxon>
        <taxon>Cupriavidus</taxon>
    </lineage>
</organism>
<sequence>MARIAGVNIPNHKHTEIGLTAIYGVGRSRARKICEATGVPFDKKVKDLTDADLEKLRDEVGKVTVEGDLRRETTMNIKRLMDLGCYRGMRHRKGLPLRGQRTRTNARTRKGPRKAGVALKK</sequence>